<proteinExistence type="evidence at protein level"/>
<comment type="function">
    <text evidence="3">Cyclic nucleotide synthase (second messenger synthase) of a CBASS antivirus system (PubMed:30787435, PubMed:34784509). CBASS (cyclic oligonucleotide-based antiphage signaling system) provides immunity against bacteriophages. The CD-NTase protein (CdnB, this protein) synthesizes cyclic nucleotides in response to infection; these serve as specific second messenger signals (PubMed:34784509). The signals activate a diverse range of effectors, leading to bacterial cell death and thus abortive phage infection (PubMed:34784509). The effector protein for this system is membrane protein Cap15 (PubMed:34784509).</text>
</comment>
<comment type="function">
    <text evidence="2 7">Catalyzes the synthesis of 3',3'-cyclic GMP-AMP (3'3'-cGAMP) from GTP and ATP, a second messenger in cell signal transduction (Probable) (PubMed:30787435, PubMed:34784509). Also makes cyclic UMP-AMP, cyclic UMP-GMP, cyclic di-AMP and cyclic-di-GMP (PubMed:30787435).</text>
</comment>
<comment type="function">
    <text evidence="3">Protects E.coli against phage infection. When the CBASS operon (cdnB-cap15) is introduced in E.coli MG1655 there is about 100-fold protection against phage T2 and about 10-fold protection against phage T5 and T6 (PubMed:34784509).</text>
</comment>
<comment type="catalytic activity">
    <reaction evidence="2 7">
        <text>GTP + ATP = 3',3'-cGAMP + 2 diphosphate</text>
        <dbReference type="Rhea" id="RHEA:35647"/>
        <dbReference type="ChEBI" id="CHEBI:30616"/>
        <dbReference type="ChEBI" id="CHEBI:33019"/>
        <dbReference type="ChEBI" id="CHEBI:37565"/>
        <dbReference type="ChEBI" id="CHEBI:71501"/>
    </reaction>
    <physiologicalReaction direction="left-to-right" evidence="6">
        <dbReference type="Rhea" id="RHEA:35648"/>
    </physiologicalReaction>
</comment>
<comment type="catalytic activity">
    <reaction evidence="2">
        <text>UTP + ATP = 3',3'-cUAMP + 2 diphosphate</text>
        <dbReference type="Rhea" id="RHEA:60456"/>
        <dbReference type="ChEBI" id="CHEBI:30616"/>
        <dbReference type="ChEBI" id="CHEBI:33019"/>
        <dbReference type="ChEBI" id="CHEBI:46398"/>
        <dbReference type="ChEBI" id="CHEBI:143809"/>
    </reaction>
    <physiologicalReaction direction="left-to-right" evidence="6">
        <dbReference type="Rhea" id="RHEA:60457"/>
    </physiologicalReaction>
</comment>
<comment type="catalytic activity">
    <reaction evidence="2">
        <text>2 ATP = 3',3'-c-di-AMP + 2 diphosphate</text>
        <dbReference type="Rhea" id="RHEA:35655"/>
        <dbReference type="ChEBI" id="CHEBI:30616"/>
        <dbReference type="ChEBI" id="CHEBI:33019"/>
        <dbReference type="ChEBI" id="CHEBI:71500"/>
        <dbReference type="EC" id="2.7.7.85"/>
    </reaction>
    <physiologicalReaction direction="left-to-right" evidence="6">
        <dbReference type="Rhea" id="RHEA:35656"/>
    </physiologicalReaction>
</comment>
<comment type="catalytic activity">
    <reaction evidence="2">
        <text>2 GTP = 3',3'-c-di-GMP + 2 diphosphate</text>
        <dbReference type="Rhea" id="RHEA:24898"/>
        <dbReference type="ChEBI" id="CHEBI:33019"/>
        <dbReference type="ChEBI" id="CHEBI:37565"/>
        <dbReference type="ChEBI" id="CHEBI:58805"/>
        <dbReference type="EC" id="2.7.7.65"/>
    </reaction>
    <physiologicalReaction direction="left-to-right" evidence="6">
        <dbReference type="Rhea" id="RHEA:24899"/>
    </physiologicalReaction>
</comment>
<comment type="catalytic activity">
    <reaction evidence="2">
        <text>UTP + GTP = 3',3'-cGMP-UMP + 2 diphosphate</text>
        <dbReference type="Rhea" id="RHEA:77707"/>
        <dbReference type="ChEBI" id="CHEBI:33019"/>
        <dbReference type="ChEBI" id="CHEBI:37565"/>
        <dbReference type="ChEBI" id="CHEBI:46398"/>
        <dbReference type="ChEBI" id="CHEBI:197444"/>
    </reaction>
    <physiologicalReaction direction="left-to-right" evidence="6">
        <dbReference type="Rhea" id="RHEA:77708"/>
    </physiologicalReaction>
</comment>
<comment type="cofactor">
    <cofactor evidence="1">
        <name>Mg(2+)</name>
        <dbReference type="ChEBI" id="CHEBI:18420"/>
    </cofactor>
    <text evidence="1">Binds 1 Mg(2+) ion per subunit.</text>
</comment>
<comment type="similarity">
    <text evidence="6">Belongs to the CD-NTase family. B06 subfamily.</text>
</comment>
<dbReference type="EC" id="2.7.7.-" evidence="2 7"/>
<dbReference type="EC" id="2.7.7.65" evidence="2"/>
<dbReference type="EC" id="2.7.7.85" evidence="2"/>
<dbReference type="EMBL" id="PTRT01000132">
    <property type="status" value="NOT_ANNOTATED_CDS"/>
    <property type="molecule type" value="Genomic_DNA"/>
</dbReference>
<dbReference type="RefSeq" id="WP_000995828.1">
    <property type="nucleotide sequence ID" value="NZ_PTRT01000132.1"/>
</dbReference>
<dbReference type="SMR" id="P0DXA3"/>
<dbReference type="GO" id="GO:0005524">
    <property type="term" value="F:ATP binding"/>
    <property type="evidence" value="ECO:0007669"/>
    <property type="project" value="UniProtKB-KW"/>
</dbReference>
<dbReference type="GO" id="GO:0046872">
    <property type="term" value="F:metal ion binding"/>
    <property type="evidence" value="ECO:0007669"/>
    <property type="project" value="UniProtKB-KW"/>
</dbReference>
<dbReference type="GO" id="GO:0016779">
    <property type="term" value="F:nucleotidyltransferase activity"/>
    <property type="evidence" value="ECO:0007669"/>
    <property type="project" value="UniProtKB-KW"/>
</dbReference>
<dbReference type="GO" id="GO:0051607">
    <property type="term" value="P:defense response to virus"/>
    <property type="evidence" value="ECO:0007669"/>
    <property type="project" value="UniProtKB-KW"/>
</dbReference>
<dbReference type="GO" id="GO:0009117">
    <property type="term" value="P:nucleotide metabolic process"/>
    <property type="evidence" value="ECO:0007669"/>
    <property type="project" value="UniProtKB-KW"/>
</dbReference>
<dbReference type="InterPro" id="IPR040511">
    <property type="entry name" value="AGS_C"/>
</dbReference>
<dbReference type="InterPro" id="IPR048445">
    <property type="entry name" value="DncV-like_NTFase"/>
</dbReference>
<dbReference type="Pfam" id="PF18134">
    <property type="entry name" value="AGS_C"/>
    <property type="match status" value="1"/>
</dbReference>
<dbReference type="Pfam" id="PF21654">
    <property type="entry name" value="DncV-like_NTFase"/>
    <property type="match status" value="1"/>
</dbReference>
<gene>
    <name evidence="5" type="primary">cdnB</name>
    <name type="ORF">BSJ22_RS20895</name>
</gene>
<name>CDNB_ESCAL</name>
<protein>
    <recommendedName>
        <fullName evidence="5">Cyclic GMP-AMP synthase</fullName>
        <shortName>c-GAMP synthase</shortName>
        <shortName>c-GMP-AMP synthase</shortName>
        <ecNumber evidence="2 7">2.7.7.-</ecNumber>
        <ecNumber evidence="2">2.7.7.65</ecNumber>
        <ecNumber evidence="2">2.7.7.85</ecNumber>
    </recommendedName>
    <alternativeName>
        <fullName evidence="4">CD-NTase015</fullName>
    </alternativeName>
    <alternativeName>
        <fullName evidence="5">EaCdnB</fullName>
    </alternativeName>
</protein>
<reference key="1">
    <citation type="journal article" date="2018" name="Genome Announc.">
        <title>Draft Genome Sequences of Escherichia albertii, Escherichia fergusonii, and Strains Belonging to Six Cryptic Lineages of Escherichia spp.</title>
        <authorList>
            <person name="Gangiredla J."/>
            <person name="Mammel M.K."/>
            <person name="Barnaba T.J."/>
            <person name="Tartera C."/>
            <person name="Gebru S.T."/>
            <person name="Patel I.R."/>
            <person name="Leonard S.R."/>
            <person name="Kotewicz M.L."/>
            <person name="Lampel K.A."/>
            <person name="Elkins C.A."/>
            <person name="Lacher D.W."/>
        </authorList>
    </citation>
    <scope>NUCLEOTIDE SEQUENCE [LARGE SCALE GENOMIC DNA]</scope>
    <source>
        <strain>MOD1-EC1698</strain>
    </source>
</reference>
<reference key="2">
    <citation type="journal article" date="2019" name="Nature">
        <title>Bacterial cGAS-like enzymes synthesize diverse nucleotide signals.</title>
        <authorList>
            <person name="Whiteley A.T."/>
            <person name="Eaglesham J.B."/>
            <person name="de Oliveira Mann C.C."/>
            <person name="Morehouse B.R."/>
            <person name="Lowey B."/>
            <person name="Nieminen E.A."/>
            <person name="Danilchanka O."/>
            <person name="King D.S."/>
            <person name="Lee A.S.Y."/>
            <person name="Mekalanos J.J."/>
            <person name="Kranzusch P.J."/>
        </authorList>
    </citation>
    <scope>FUNCTION</scope>
    <scope>CATALYTIC ACTIVITY</scope>
    <scope>NOMENCLATURE</scope>
    <scope>SIMILARITY</scope>
</reference>
<reference key="3">
    <citation type="journal article" date="2020" name="Nat. Microbiol.">
        <title>Diversity and classification of cyclic-oligonucleotide-based anti-phage signalling systems.</title>
        <authorList>
            <person name="Millman A."/>
            <person name="Melamed S."/>
            <person name="Amitai G."/>
            <person name="Sorek R."/>
        </authorList>
    </citation>
    <scope>CLASSIFICATION AND NOMENCLATURE</scope>
</reference>
<reference key="4">
    <citation type="journal article" date="2021" name="Mol. Cell">
        <title>Effector-mediated membrane disruption controls cell death in CBASS antiphage defense.</title>
        <authorList>
            <person name="Duncan-Lowey B."/>
            <person name="McNamara-Bordewick N.K."/>
            <person name="Tal N."/>
            <person name="Sorek R."/>
            <person name="Kranzusch P.J."/>
        </authorList>
    </citation>
    <scope>FUNCTION</scope>
    <scope>DOMAIN</scope>
    <scope>MUTAGENESIS OF 78-ASP--ASP-80</scope>
    <source>
        <strain>MOD1-EC1698</strain>
    </source>
</reference>
<evidence type="ECO:0000250" key="1">
    <source>
        <dbReference type="UniProtKB" id="A0A853PXE5"/>
    </source>
</evidence>
<evidence type="ECO:0000269" key="2">
    <source>
    </source>
</evidence>
<evidence type="ECO:0000269" key="3">
    <source>
    </source>
</evidence>
<evidence type="ECO:0000303" key="4">
    <source>
    </source>
</evidence>
<evidence type="ECO:0000303" key="5">
    <source>
    </source>
</evidence>
<evidence type="ECO:0000305" key="6">
    <source>
    </source>
</evidence>
<evidence type="ECO:0000305" key="7">
    <source>
    </source>
</evidence>
<keyword id="KW-0051">Antiviral defense</keyword>
<keyword id="KW-0067">ATP-binding</keyword>
<keyword id="KW-0460">Magnesium</keyword>
<keyword id="KW-0479">Metal-binding</keyword>
<keyword id="KW-0546">Nucleotide metabolism</keyword>
<keyword id="KW-0547">Nucleotide-binding</keyword>
<keyword id="KW-0548">Nucleotidyltransferase</keyword>
<keyword id="KW-0808">Transferase</keyword>
<organism>
    <name type="scientific">Escherichia albertii</name>
    <dbReference type="NCBI Taxonomy" id="208962"/>
    <lineage>
        <taxon>Bacteria</taxon>
        <taxon>Pseudomonadati</taxon>
        <taxon>Pseudomonadota</taxon>
        <taxon>Gammaproteobacteria</taxon>
        <taxon>Enterobacterales</taxon>
        <taxon>Enterobacteriaceae</taxon>
        <taxon>Escherichia</taxon>
    </lineage>
</organism>
<accession>P0DXA3</accession>
<sequence length="443" mass="50582">MNCSDLFYADTNTENTLHQRTQLSEVILSKGIAKKNELIEFLRQELKEAFDCDVRFWLQGSYKSHTLIKPVDKFSSYDIDIGVYLFFDAENEGVDSKDVKETLRDALLSYCSINNEAKLQESKNACEGLKFSTFLTVDTPIYYKTDTKIKLATDKGWSDSDPKAIQDWITNYYKDKSDRALMKRLVRYFKAWVNVKWQNTGFKKIPSLAINVLVAQHMKQHVREDDCFIYTALSICEELESTLIVRNPLNNSNLISMPQDAECFAHQKLDELKQVCLSCIKSDDIKRGAHFSNLFQHYFPQISLDSATGSTGLPTVVNVPEISVCRYDKNGNHVETIITDRLTVNKGDSLTFTIRNHYDFNIYSSAQWTVRNIGSQANDANDIGHSVTGKPSESHKRGTSYTGSHTMECMILHNGAIIGFKTIHVIVKPARTVRRKTLKFWRA</sequence>
<feature type="chain" id="PRO_0000459800" description="Cyclic GMP-AMP synthase">
    <location>
        <begin position="1"/>
        <end position="443"/>
    </location>
</feature>
<feature type="active site" evidence="1">
    <location>
        <position position="78"/>
    </location>
</feature>
<feature type="active site" evidence="1">
    <location>
        <position position="80"/>
    </location>
</feature>
<feature type="active site" evidence="1">
    <location>
        <position position="138"/>
    </location>
</feature>
<feature type="binding site" evidence="1">
    <location>
        <position position="61"/>
    </location>
    <ligand>
        <name>ATP</name>
        <dbReference type="ChEBI" id="CHEBI:30616"/>
        <label>1</label>
    </ligand>
</feature>
<feature type="binding site" evidence="1">
    <location>
        <position position="80"/>
    </location>
    <ligand>
        <name>Mg(2+)</name>
        <dbReference type="ChEBI" id="CHEBI:18420"/>
    </ligand>
</feature>
<feature type="binding site" evidence="1">
    <location>
        <position position="124"/>
    </location>
    <ligand>
        <name>ATP</name>
        <dbReference type="ChEBI" id="CHEBI:30616"/>
        <label>2</label>
    </ligand>
</feature>
<feature type="binding site" evidence="1">
    <location>
        <position position="138"/>
    </location>
    <ligand>
        <name>Mg(2+)</name>
        <dbReference type="ChEBI" id="CHEBI:18420"/>
    </ligand>
</feature>
<feature type="binding site" evidence="1">
    <location>
        <position position="208"/>
    </location>
    <ligand>
        <name>ATP</name>
        <dbReference type="ChEBI" id="CHEBI:30616"/>
        <label>1</label>
    </ligand>
</feature>
<feature type="site" description="Important for nucleotide discrimination" evidence="1">
    <location>
        <position position="59"/>
    </location>
</feature>
<feature type="mutagenesis site" description="No longer protects against phage." evidence="3">
    <original>DID</original>
    <variation>AIA</variation>
    <location>
        <begin position="78"/>
        <end position="80"/>
    </location>
</feature>